<accession>Q8BJ83</accession>
<accession>Q9D156</accession>
<feature type="signal peptide" evidence="1">
    <location>
        <begin position="1"/>
        <end position="44"/>
    </location>
</feature>
<feature type="chain" id="PRO_0000298990" description="TM2 domain-containing protein 3">
    <location>
        <begin position="45"/>
        <end position="261"/>
    </location>
</feature>
<feature type="topological domain" description="Extracellular" evidence="5">
    <location>
        <begin position="45"/>
        <end position="193"/>
    </location>
</feature>
<feature type="transmembrane region" description="Helical" evidence="1">
    <location>
        <begin position="194"/>
        <end position="214"/>
    </location>
</feature>
<feature type="topological domain" description="Cytoplasmic" evidence="5">
    <location>
        <begin position="215"/>
        <end position="229"/>
    </location>
</feature>
<feature type="transmembrane region" description="Helical" evidence="1">
    <location>
        <begin position="230"/>
        <end position="250"/>
    </location>
</feature>
<feature type="topological domain" description="Extracellular" evidence="5">
    <location>
        <begin position="251"/>
        <end position="261"/>
    </location>
</feature>
<feature type="domain" description="TM2" evidence="1">
    <location>
        <begin position="197"/>
        <end position="244"/>
    </location>
</feature>
<feature type="glycosylation site" description="N-linked (GlcNAc...) asparagine" evidence="2">
    <location>
        <position position="101"/>
    </location>
</feature>
<feature type="glycosylation site" description="N-linked (GlcNAc...) asparagine" evidence="2">
    <location>
        <position position="136"/>
    </location>
</feature>
<feature type="glycosylation site" description="N-linked (GlcNAc...) asparagine" evidence="2">
    <location>
        <position position="154"/>
    </location>
</feature>
<feature type="glycosylation site" description="N-linked (GlcNAc...) asparagine" evidence="2">
    <location>
        <position position="171"/>
    </location>
</feature>
<feature type="glycosylation site" description="N-linked (GlcNAc...) asparagine" evidence="2">
    <location>
        <position position="183"/>
    </location>
</feature>
<feature type="glycosylation site" description="N-linked (GlcNAc...) asparagine" evidence="2">
    <location>
        <position position="193"/>
    </location>
</feature>
<feature type="splice variant" id="VSP_027497" description="In isoform 2." evidence="3 4">
    <location>
        <begin position="31"/>
        <end position="61"/>
    </location>
</feature>
<name>TM2D3_MOUSE</name>
<organism>
    <name type="scientific">Mus musculus</name>
    <name type="common">Mouse</name>
    <dbReference type="NCBI Taxonomy" id="10090"/>
    <lineage>
        <taxon>Eukaryota</taxon>
        <taxon>Metazoa</taxon>
        <taxon>Chordata</taxon>
        <taxon>Craniata</taxon>
        <taxon>Vertebrata</taxon>
        <taxon>Euteleostomi</taxon>
        <taxon>Mammalia</taxon>
        <taxon>Eutheria</taxon>
        <taxon>Euarchontoglires</taxon>
        <taxon>Glires</taxon>
        <taxon>Rodentia</taxon>
        <taxon>Myomorpha</taxon>
        <taxon>Muroidea</taxon>
        <taxon>Muridae</taxon>
        <taxon>Murinae</taxon>
        <taxon>Mus</taxon>
        <taxon>Mus</taxon>
    </lineage>
</organism>
<proteinExistence type="evidence at transcript level"/>
<keyword id="KW-0025">Alternative splicing</keyword>
<keyword id="KW-0325">Glycoprotein</keyword>
<keyword id="KW-0472">Membrane</keyword>
<keyword id="KW-1185">Reference proteome</keyword>
<keyword id="KW-0732">Signal</keyword>
<keyword id="KW-0812">Transmembrane</keyword>
<keyword id="KW-1133">Transmembrane helix</keyword>
<sequence>MEAAAEPLRSVRHLSRVLLFLSQCYILSGDGSLNLEHSQPLAQAIKDPGPTRTFSVVPRAAENQLFSHLTESTEIPPYMTKCPSNGLCSRLPADCIECATNVSCTYGKPVTFDCTVKPSVTCVDQDLKPQRNFVINMTCRFCWQLPETDYECSNSTTCMTVACPRQRYFANCTVRDHIHCLGNRTFPKLLYCNWTGGYKWSTALALSITLGGFGADRFYLGQWREGLGKLFSFGGLGIWTLIDVLLIGVGYVGPADGSLYI</sequence>
<comment type="subcellular location">
    <subcellularLocation>
        <location evidence="5">Membrane</location>
        <topology evidence="5">Multi-pass membrane protein</topology>
    </subcellularLocation>
</comment>
<comment type="alternative products">
    <event type="alternative splicing"/>
    <isoform>
        <id>Q8BJ83-1</id>
        <name>1</name>
        <sequence type="displayed"/>
    </isoform>
    <isoform>
        <id>Q8BJ83-2</id>
        <name>2</name>
        <sequence type="described" ref="VSP_027497"/>
    </isoform>
</comment>
<comment type="similarity">
    <text evidence="5">Belongs to the TM2 family.</text>
</comment>
<evidence type="ECO:0000255" key="1"/>
<evidence type="ECO:0000255" key="2">
    <source>
        <dbReference type="PROSITE-ProRule" id="PRU00498"/>
    </source>
</evidence>
<evidence type="ECO:0000303" key="3">
    <source>
    </source>
</evidence>
<evidence type="ECO:0000303" key="4">
    <source>
    </source>
</evidence>
<evidence type="ECO:0000305" key="5"/>
<reference key="1">
    <citation type="journal article" date="2005" name="Science">
        <title>The transcriptional landscape of the mammalian genome.</title>
        <authorList>
            <person name="Carninci P."/>
            <person name="Kasukawa T."/>
            <person name="Katayama S."/>
            <person name="Gough J."/>
            <person name="Frith M.C."/>
            <person name="Maeda N."/>
            <person name="Oyama R."/>
            <person name="Ravasi T."/>
            <person name="Lenhard B."/>
            <person name="Wells C."/>
            <person name="Kodzius R."/>
            <person name="Shimokawa K."/>
            <person name="Bajic V.B."/>
            <person name="Brenner S.E."/>
            <person name="Batalov S."/>
            <person name="Forrest A.R."/>
            <person name="Zavolan M."/>
            <person name="Davis M.J."/>
            <person name="Wilming L.G."/>
            <person name="Aidinis V."/>
            <person name="Allen J.E."/>
            <person name="Ambesi-Impiombato A."/>
            <person name="Apweiler R."/>
            <person name="Aturaliya R.N."/>
            <person name="Bailey T.L."/>
            <person name="Bansal M."/>
            <person name="Baxter L."/>
            <person name="Beisel K.W."/>
            <person name="Bersano T."/>
            <person name="Bono H."/>
            <person name="Chalk A.M."/>
            <person name="Chiu K.P."/>
            <person name="Choudhary V."/>
            <person name="Christoffels A."/>
            <person name="Clutterbuck D.R."/>
            <person name="Crowe M.L."/>
            <person name="Dalla E."/>
            <person name="Dalrymple B.P."/>
            <person name="de Bono B."/>
            <person name="Della Gatta G."/>
            <person name="di Bernardo D."/>
            <person name="Down T."/>
            <person name="Engstrom P."/>
            <person name="Fagiolini M."/>
            <person name="Faulkner G."/>
            <person name="Fletcher C.F."/>
            <person name="Fukushima T."/>
            <person name="Furuno M."/>
            <person name="Futaki S."/>
            <person name="Gariboldi M."/>
            <person name="Georgii-Hemming P."/>
            <person name="Gingeras T.R."/>
            <person name="Gojobori T."/>
            <person name="Green R.E."/>
            <person name="Gustincich S."/>
            <person name="Harbers M."/>
            <person name="Hayashi Y."/>
            <person name="Hensch T.K."/>
            <person name="Hirokawa N."/>
            <person name="Hill D."/>
            <person name="Huminiecki L."/>
            <person name="Iacono M."/>
            <person name="Ikeo K."/>
            <person name="Iwama A."/>
            <person name="Ishikawa T."/>
            <person name="Jakt M."/>
            <person name="Kanapin A."/>
            <person name="Katoh M."/>
            <person name="Kawasawa Y."/>
            <person name="Kelso J."/>
            <person name="Kitamura H."/>
            <person name="Kitano H."/>
            <person name="Kollias G."/>
            <person name="Krishnan S.P."/>
            <person name="Kruger A."/>
            <person name="Kummerfeld S.K."/>
            <person name="Kurochkin I.V."/>
            <person name="Lareau L.F."/>
            <person name="Lazarevic D."/>
            <person name="Lipovich L."/>
            <person name="Liu J."/>
            <person name="Liuni S."/>
            <person name="McWilliam S."/>
            <person name="Madan Babu M."/>
            <person name="Madera M."/>
            <person name="Marchionni L."/>
            <person name="Matsuda H."/>
            <person name="Matsuzawa S."/>
            <person name="Miki H."/>
            <person name="Mignone F."/>
            <person name="Miyake S."/>
            <person name="Morris K."/>
            <person name="Mottagui-Tabar S."/>
            <person name="Mulder N."/>
            <person name="Nakano N."/>
            <person name="Nakauchi H."/>
            <person name="Ng P."/>
            <person name="Nilsson R."/>
            <person name="Nishiguchi S."/>
            <person name="Nishikawa S."/>
            <person name="Nori F."/>
            <person name="Ohara O."/>
            <person name="Okazaki Y."/>
            <person name="Orlando V."/>
            <person name="Pang K.C."/>
            <person name="Pavan W.J."/>
            <person name="Pavesi G."/>
            <person name="Pesole G."/>
            <person name="Petrovsky N."/>
            <person name="Piazza S."/>
            <person name="Reed J."/>
            <person name="Reid J.F."/>
            <person name="Ring B.Z."/>
            <person name="Ringwald M."/>
            <person name="Rost B."/>
            <person name="Ruan Y."/>
            <person name="Salzberg S.L."/>
            <person name="Sandelin A."/>
            <person name="Schneider C."/>
            <person name="Schoenbach C."/>
            <person name="Sekiguchi K."/>
            <person name="Semple C.A."/>
            <person name="Seno S."/>
            <person name="Sessa L."/>
            <person name="Sheng Y."/>
            <person name="Shibata Y."/>
            <person name="Shimada H."/>
            <person name="Shimada K."/>
            <person name="Silva D."/>
            <person name="Sinclair B."/>
            <person name="Sperling S."/>
            <person name="Stupka E."/>
            <person name="Sugiura K."/>
            <person name="Sultana R."/>
            <person name="Takenaka Y."/>
            <person name="Taki K."/>
            <person name="Tammoja K."/>
            <person name="Tan S.L."/>
            <person name="Tang S."/>
            <person name="Taylor M.S."/>
            <person name="Tegner J."/>
            <person name="Teichmann S.A."/>
            <person name="Ueda H.R."/>
            <person name="van Nimwegen E."/>
            <person name="Verardo R."/>
            <person name="Wei C.L."/>
            <person name="Yagi K."/>
            <person name="Yamanishi H."/>
            <person name="Zabarovsky E."/>
            <person name="Zhu S."/>
            <person name="Zimmer A."/>
            <person name="Hide W."/>
            <person name="Bult C."/>
            <person name="Grimmond S.M."/>
            <person name="Teasdale R.D."/>
            <person name="Liu E.T."/>
            <person name="Brusic V."/>
            <person name="Quackenbush J."/>
            <person name="Wahlestedt C."/>
            <person name="Mattick J.S."/>
            <person name="Hume D.A."/>
            <person name="Kai C."/>
            <person name="Sasaki D."/>
            <person name="Tomaru Y."/>
            <person name="Fukuda S."/>
            <person name="Kanamori-Katayama M."/>
            <person name="Suzuki M."/>
            <person name="Aoki J."/>
            <person name="Arakawa T."/>
            <person name="Iida J."/>
            <person name="Imamura K."/>
            <person name="Itoh M."/>
            <person name="Kato T."/>
            <person name="Kawaji H."/>
            <person name="Kawagashira N."/>
            <person name="Kawashima T."/>
            <person name="Kojima M."/>
            <person name="Kondo S."/>
            <person name="Konno H."/>
            <person name="Nakano K."/>
            <person name="Ninomiya N."/>
            <person name="Nishio T."/>
            <person name="Okada M."/>
            <person name="Plessy C."/>
            <person name="Shibata K."/>
            <person name="Shiraki T."/>
            <person name="Suzuki S."/>
            <person name="Tagami M."/>
            <person name="Waki K."/>
            <person name="Watahiki A."/>
            <person name="Okamura-Oho Y."/>
            <person name="Suzuki H."/>
            <person name="Kawai J."/>
            <person name="Hayashizaki Y."/>
        </authorList>
    </citation>
    <scope>NUCLEOTIDE SEQUENCE [LARGE SCALE MRNA] (ISOFORMS 1 AND 2)</scope>
    <source>
        <strain>C57BL/6J</strain>
        <tissue>Forelimb</tissue>
    </source>
</reference>
<reference key="2">
    <citation type="journal article" date="2004" name="Genome Res.">
        <title>The status, quality, and expansion of the NIH full-length cDNA project: the Mammalian Gene Collection (MGC).</title>
        <authorList>
            <consortium name="The MGC Project Team"/>
        </authorList>
    </citation>
    <scope>NUCLEOTIDE SEQUENCE [LARGE SCALE MRNA] (ISOFORM 2)</scope>
    <source>
        <strain>FVB/N</strain>
        <tissue>Salivary gland</tissue>
    </source>
</reference>
<gene>
    <name type="primary">Tm2d3</name>
</gene>
<protein>
    <recommendedName>
        <fullName>TM2 domain-containing protein 3</fullName>
    </recommendedName>
</protein>
<dbReference type="EMBL" id="AK003917">
    <property type="protein sequence ID" value="BAB23075.1"/>
    <property type="molecule type" value="mRNA"/>
</dbReference>
<dbReference type="EMBL" id="AK077858">
    <property type="protein sequence ID" value="BAC37037.1"/>
    <property type="molecule type" value="mRNA"/>
</dbReference>
<dbReference type="EMBL" id="BC024620">
    <property type="protein sequence ID" value="AAH24620.1"/>
    <property type="molecule type" value="mRNA"/>
</dbReference>
<dbReference type="CCDS" id="CCDS21340.1">
    <molecule id="Q8BJ83-2"/>
</dbReference>
<dbReference type="CCDS" id="CCDS21341.1">
    <molecule id="Q8BJ83-1"/>
</dbReference>
<dbReference type="RefSeq" id="NP_081071.1">
    <molecule id="Q8BJ83-2"/>
    <property type="nucleotide sequence ID" value="NM_026795.4"/>
</dbReference>
<dbReference type="RefSeq" id="NP_835157.1">
    <molecule id="Q8BJ83-1"/>
    <property type="nucleotide sequence ID" value="NM_178056.4"/>
</dbReference>
<dbReference type="FunCoup" id="Q8BJ83">
    <property type="interactions" value="114"/>
</dbReference>
<dbReference type="STRING" id="10090.ENSMUSP00000064967"/>
<dbReference type="GlyConnect" id="2771">
    <property type="glycosylation" value="7 N-Linked glycans (2 sites)"/>
</dbReference>
<dbReference type="GlyCosmos" id="Q8BJ83">
    <property type="glycosylation" value="2 sites, 7 glycans"/>
</dbReference>
<dbReference type="GlyGen" id="Q8BJ83">
    <property type="glycosylation" value="7 sites, 10 N-linked glycans (5 sites)"/>
</dbReference>
<dbReference type="iPTMnet" id="Q8BJ83"/>
<dbReference type="PhosphoSitePlus" id="Q8BJ83"/>
<dbReference type="SwissPalm" id="Q8BJ83"/>
<dbReference type="ProteomicsDB" id="259562">
    <molecule id="Q8BJ83-1"/>
</dbReference>
<dbReference type="ProteomicsDB" id="259563">
    <molecule id="Q8BJ83-2"/>
</dbReference>
<dbReference type="Antibodypedia" id="53600">
    <property type="antibodies" value="92 antibodies from 15 providers"/>
</dbReference>
<dbReference type="DNASU" id="68634"/>
<dbReference type="Ensembl" id="ENSMUST00000032726.14">
    <molecule id="Q8BJ83-2"/>
    <property type="protein sequence ID" value="ENSMUSP00000032726.8"/>
    <property type="gene ID" value="ENSMUSG00000078681.11"/>
</dbReference>
<dbReference type="Ensembl" id="ENSMUST00000065574.9">
    <molecule id="Q8BJ83-1"/>
    <property type="protein sequence ID" value="ENSMUSP00000064967.3"/>
    <property type="gene ID" value="ENSMUSG00000078681.11"/>
</dbReference>
<dbReference type="Ensembl" id="ENSMUST00000107495.5">
    <molecule id="Q8BJ83-1"/>
    <property type="protein sequence ID" value="ENSMUSP00000103119.4"/>
    <property type="gene ID" value="ENSMUSG00000078681.11"/>
</dbReference>
<dbReference type="GeneID" id="68634"/>
<dbReference type="KEGG" id="mmu:68634"/>
<dbReference type="UCSC" id="uc009hgu.2">
    <molecule id="Q8BJ83-2"/>
    <property type="organism name" value="mouse"/>
</dbReference>
<dbReference type="UCSC" id="uc012fms.1">
    <molecule id="Q8BJ83-1"/>
    <property type="organism name" value="mouse"/>
</dbReference>
<dbReference type="AGR" id="MGI:1915884"/>
<dbReference type="CTD" id="80213"/>
<dbReference type="MGI" id="MGI:1915884">
    <property type="gene designation" value="Tm2d3"/>
</dbReference>
<dbReference type="VEuPathDB" id="HostDB:ENSMUSG00000078681"/>
<dbReference type="GeneTree" id="ENSGT00940000158389"/>
<dbReference type="HOGENOM" id="CLU_084872_1_0_1"/>
<dbReference type="InParanoid" id="Q8BJ83"/>
<dbReference type="OMA" id="HANCNSA"/>
<dbReference type="OrthoDB" id="10257855at2759"/>
<dbReference type="PhylomeDB" id="Q8BJ83"/>
<dbReference type="TreeFam" id="TF314896"/>
<dbReference type="BioGRID-ORCS" id="68634">
    <property type="hits" value="4 hits in 77 CRISPR screens"/>
</dbReference>
<dbReference type="ChiTaRS" id="Tm2d3">
    <property type="organism name" value="mouse"/>
</dbReference>
<dbReference type="PRO" id="PR:Q8BJ83"/>
<dbReference type="Proteomes" id="UP000000589">
    <property type="component" value="Chromosome 7"/>
</dbReference>
<dbReference type="RNAct" id="Q8BJ83">
    <property type="molecule type" value="protein"/>
</dbReference>
<dbReference type="Bgee" id="ENSMUSG00000078681">
    <property type="expression patterns" value="Expressed in animal zygote and 252 other cell types or tissues"/>
</dbReference>
<dbReference type="ExpressionAtlas" id="Q8BJ83">
    <property type="expression patterns" value="baseline and differential"/>
</dbReference>
<dbReference type="GO" id="GO:0016020">
    <property type="term" value="C:membrane"/>
    <property type="evidence" value="ECO:0007669"/>
    <property type="project" value="UniProtKB-SubCell"/>
</dbReference>
<dbReference type="InterPro" id="IPR007829">
    <property type="entry name" value="TM2"/>
</dbReference>
<dbReference type="InterPro" id="IPR050932">
    <property type="entry name" value="TM2D1-3-like"/>
</dbReference>
<dbReference type="PANTHER" id="PTHR21016">
    <property type="entry name" value="BETA-AMYLOID BINDING PROTEIN-RELATED"/>
    <property type="match status" value="1"/>
</dbReference>
<dbReference type="PANTHER" id="PTHR21016:SF7">
    <property type="entry name" value="TM2 DOMAIN-CONTAINING PROTEIN 3"/>
    <property type="match status" value="1"/>
</dbReference>
<dbReference type="Pfam" id="PF05154">
    <property type="entry name" value="TM2"/>
    <property type="match status" value="1"/>
</dbReference>